<comment type="function">
    <text evidence="1">Catalyzes the formation of cyclic 2,3-diphosphoglycerate (cDPG) by formation of an intramolecular phosphoanhydride bond at the expense of ATP.</text>
</comment>
<comment type="catalytic activity">
    <reaction evidence="1">
        <text>(2R)-2,3-bisphosphoglycerate + ATP + H(+) = cyclic (2R)-2,3-bisphosphoglycerate + ADP + phosphate</text>
        <dbReference type="Rhea" id="RHEA:42412"/>
        <dbReference type="ChEBI" id="CHEBI:15378"/>
        <dbReference type="ChEBI" id="CHEBI:30616"/>
        <dbReference type="ChEBI" id="CHEBI:43474"/>
        <dbReference type="ChEBI" id="CHEBI:58248"/>
        <dbReference type="ChEBI" id="CHEBI:79081"/>
        <dbReference type="ChEBI" id="CHEBI:456216"/>
        <dbReference type="EC" id="6.5.1.9"/>
    </reaction>
</comment>
<comment type="subcellular location">
    <subcellularLocation>
        <location evidence="1">Cytoplasm</location>
    </subcellularLocation>
</comment>
<comment type="similarity">
    <text evidence="1">Belongs to the cyclic 2,3-diphosphoglycerate synthetase family.</text>
</comment>
<comment type="sequence caution" evidence="2">
    <conflict type="erroneous initiation">
        <sequence resource="EMBL-CDS" id="CAB49073"/>
    </conflict>
    <text>Extended N-terminus.</text>
</comment>
<dbReference type="EC" id="6.5.1.9" evidence="1"/>
<dbReference type="EMBL" id="AJ248283">
    <property type="protein sequence ID" value="CAB49073.1"/>
    <property type="status" value="ALT_INIT"/>
    <property type="molecule type" value="Genomic_DNA"/>
</dbReference>
<dbReference type="EMBL" id="HE613800">
    <property type="protein sequence ID" value="CCE69525.1"/>
    <property type="molecule type" value="Genomic_DNA"/>
</dbReference>
<dbReference type="PIR" id="B75203">
    <property type="entry name" value="B75203"/>
</dbReference>
<dbReference type="RefSeq" id="WP_048146493.1">
    <property type="nucleotide sequence ID" value="NC_000868.1"/>
</dbReference>
<dbReference type="SMR" id="Q9V2C5"/>
<dbReference type="STRING" id="272844.PAB2252"/>
<dbReference type="KEGG" id="pab:PAB2252"/>
<dbReference type="PATRIC" id="fig|272844.11.peg.162"/>
<dbReference type="eggNOG" id="arCOG01230">
    <property type="taxonomic scope" value="Archaea"/>
</dbReference>
<dbReference type="HOGENOM" id="CLU_638764_0_0_2"/>
<dbReference type="OrthoDB" id="85545at2157"/>
<dbReference type="Proteomes" id="UP000000810">
    <property type="component" value="Chromosome"/>
</dbReference>
<dbReference type="Proteomes" id="UP000009139">
    <property type="component" value="Chromosome"/>
</dbReference>
<dbReference type="GO" id="GO:0005737">
    <property type="term" value="C:cytoplasm"/>
    <property type="evidence" value="ECO:0007669"/>
    <property type="project" value="UniProtKB-SubCell"/>
</dbReference>
<dbReference type="GO" id="GO:0005524">
    <property type="term" value="F:ATP binding"/>
    <property type="evidence" value="ECO:0007669"/>
    <property type="project" value="UniProtKB-KW"/>
</dbReference>
<dbReference type="GO" id="GO:0036356">
    <property type="term" value="F:cyclic 2,3-diphosphoglycerate synthetase activity"/>
    <property type="evidence" value="ECO:0007669"/>
    <property type="project" value="InterPro"/>
</dbReference>
<dbReference type="GO" id="GO:0016874">
    <property type="term" value="F:ligase activity"/>
    <property type="evidence" value="ECO:0007669"/>
    <property type="project" value="UniProtKB-UniRule"/>
</dbReference>
<dbReference type="GO" id="GO:0006094">
    <property type="term" value="P:gluconeogenesis"/>
    <property type="evidence" value="ECO:0007669"/>
    <property type="project" value="InterPro"/>
</dbReference>
<dbReference type="Gene3D" id="3.40.50.300">
    <property type="entry name" value="P-loop containing nucleotide triphosphate hydrolases"/>
    <property type="match status" value="1"/>
</dbReference>
<dbReference type="HAMAP" id="MF_01908">
    <property type="entry name" value="Cyc_PG_syn"/>
    <property type="match status" value="1"/>
</dbReference>
<dbReference type="InterPro" id="IPR016557">
    <property type="entry name" value="Cyc_diphosphoglycerate_synth"/>
</dbReference>
<dbReference type="InterPro" id="IPR027417">
    <property type="entry name" value="P-loop_NTPase"/>
</dbReference>
<dbReference type="PIRSF" id="PIRSF009445">
    <property type="entry name" value="Cyc_PG_syn"/>
    <property type="match status" value="1"/>
</dbReference>
<evidence type="ECO:0000255" key="1">
    <source>
        <dbReference type="HAMAP-Rule" id="MF_01908"/>
    </source>
</evidence>
<evidence type="ECO:0000305" key="2"/>
<protein>
    <recommendedName>
        <fullName evidence="1">Cyclic 2,3-diphosphoglycerate synthetase</fullName>
        <shortName evidence="1">cDPGS</shortName>
        <ecNumber evidence="1">6.5.1.9</ecNumber>
    </recommendedName>
</protein>
<feature type="chain" id="PRO_0000313694" description="Cyclic 2,3-diphosphoglycerate synthetase">
    <location>
        <begin position="1"/>
        <end position="427"/>
    </location>
</feature>
<reference key="1">
    <citation type="journal article" date="2003" name="Mol. Microbiol.">
        <title>An integrated analysis of the genome of the hyperthermophilic archaeon Pyrococcus abyssi.</title>
        <authorList>
            <person name="Cohen G.N."/>
            <person name="Barbe V."/>
            <person name="Flament D."/>
            <person name="Galperin M."/>
            <person name="Heilig R."/>
            <person name="Lecompte O."/>
            <person name="Poch O."/>
            <person name="Prieur D."/>
            <person name="Querellou J."/>
            <person name="Ripp R."/>
            <person name="Thierry J.-C."/>
            <person name="Van der Oost J."/>
            <person name="Weissenbach J."/>
            <person name="Zivanovic Y."/>
            <person name="Forterre P."/>
        </authorList>
    </citation>
    <scope>NUCLEOTIDE SEQUENCE [LARGE SCALE GENOMIC DNA]</scope>
    <source>
        <strain>GE5 / Orsay</strain>
    </source>
</reference>
<reference key="2">
    <citation type="journal article" date="2012" name="Curr. Microbiol.">
        <title>Re-annotation of two hyperthermophilic archaea Pyrococcus abyssi GE5 and Pyrococcus furiosus DSM 3638.</title>
        <authorList>
            <person name="Gao J."/>
            <person name="Wang J."/>
        </authorList>
    </citation>
    <scope>GENOME REANNOTATION</scope>
    <source>
        <strain>GE5 / Orsay</strain>
    </source>
</reference>
<organism>
    <name type="scientific">Pyrococcus abyssi (strain GE5 / Orsay)</name>
    <dbReference type="NCBI Taxonomy" id="272844"/>
    <lineage>
        <taxon>Archaea</taxon>
        <taxon>Methanobacteriati</taxon>
        <taxon>Methanobacteriota</taxon>
        <taxon>Thermococci</taxon>
        <taxon>Thermococcales</taxon>
        <taxon>Thermococcaceae</taxon>
        <taxon>Pyrococcus</taxon>
    </lineage>
</organism>
<keyword id="KW-0067">ATP-binding</keyword>
<keyword id="KW-0963">Cytoplasm</keyword>
<keyword id="KW-0436">Ligase</keyword>
<keyword id="KW-0547">Nucleotide-binding</keyword>
<name>CPGS_PYRAB</name>
<gene>
    <name evidence="1" type="primary">cpgS</name>
    <name type="ordered locus">PYRAB01490</name>
    <name type="ORF">PAB2252</name>
</gene>
<proteinExistence type="inferred from homology"/>
<accession>Q9V2C5</accession>
<accession>G8ZFY4</accession>
<sequence length="427" mass="47153">MRIALIDGEHYPDVNRWALEKLNVECAVFIGGMEKIGSIEDVERALNVKLYHDKDPFKALEKALEENDVEEVIDLSDEPVMTPELRFRIASYLLKRGIAYKGADFEFRPKEWIKLEVPSINIIGTGKRVGKTAIGGFVGRTLKERYRIVIVTMGRGGPEKPEIIRGDKITITPEFLVKIAEQGRHAASDHFEDALTAGVPTIGCRRCGGGLAGFTFLDVVKEGIEVAKTLKPELIVLEGSGASFANVLSDGFITVVSALQGERIKTYMYPLRISLADIVVVTMVEEVSEGEKIKRIIKEINPDADVHLTRFAPRLIGNVEGKAIVLTTSQESAKKMAKELERKGIEIAGYSGNLANRGRLREEMNRFNYDTVIVELKAGAVDVAIREALSNGKKVVFLDNEPVNVDGKNLKSAIKKLAERILHDKGG</sequence>